<comment type="function">
    <text evidence="1">Binds to DNA and alters its conformation. May be involved in regulation of gene expression, nucleoid organization and DNA protection.</text>
</comment>
<comment type="subunit">
    <text evidence="1">Homodimer.</text>
</comment>
<comment type="subcellular location">
    <subcellularLocation>
        <location evidence="1">Cytoplasm</location>
        <location evidence="1">Nucleoid</location>
    </subcellularLocation>
</comment>
<comment type="similarity">
    <text evidence="1">Belongs to the YbaB/EbfC family.</text>
</comment>
<name>YBAB_SHIFL</name>
<reference key="1">
    <citation type="journal article" date="2002" name="Nucleic Acids Res.">
        <title>Genome sequence of Shigella flexneri 2a: insights into pathogenicity through comparison with genomes of Escherichia coli K12 and O157.</title>
        <authorList>
            <person name="Jin Q."/>
            <person name="Yuan Z."/>
            <person name="Xu J."/>
            <person name="Wang Y."/>
            <person name="Shen Y."/>
            <person name="Lu W."/>
            <person name="Wang J."/>
            <person name="Liu H."/>
            <person name="Yang J."/>
            <person name="Yang F."/>
            <person name="Zhang X."/>
            <person name="Zhang J."/>
            <person name="Yang G."/>
            <person name="Wu H."/>
            <person name="Qu D."/>
            <person name="Dong J."/>
            <person name="Sun L."/>
            <person name="Xue Y."/>
            <person name="Zhao A."/>
            <person name="Gao Y."/>
            <person name="Zhu J."/>
            <person name="Kan B."/>
            <person name="Ding K."/>
            <person name="Chen S."/>
            <person name="Cheng H."/>
            <person name="Yao Z."/>
            <person name="He B."/>
            <person name="Chen R."/>
            <person name="Ma D."/>
            <person name="Qiang B."/>
            <person name="Wen Y."/>
            <person name="Hou Y."/>
            <person name="Yu J."/>
        </authorList>
    </citation>
    <scope>NUCLEOTIDE SEQUENCE [LARGE SCALE GENOMIC DNA]</scope>
    <source>
        <strain>301 / Serotype 2a</strain>
    </source>
</reference>
<reference key="2">
    <citation type="journal article" date="2003" name="Infect. Immun.">
        <title>Complete genome sequence and comparative genomics of Shigella flexneri serotype 2a strain 2457T.</title>
        <authorList>
            <person name="Wei J."/>
            <person name="Goldberg M.B."/>
            <person name="Burland V."/>
            <person name="Venkatesan M.M."/>
            <person name="Deng W."/>
            <person name="Fournier G."/>
            <person name="Mayhew G.F."/>
            <person name="Plunkett G. III"/>
            <person name="Rose D.J."/>
            <person name="Darling A."/>
            <person name="Mau B."/>
            <person name="Perna N.T."/>
            <person name="Payne S.M."/>
            <person name="Runyen-Janecky L.J."/>
            <person name="Zhou S."/>
            <person name="Schwartz D.C."/>
            <person name="Blattner F.R."/>
        </authorList>
    </citation>
    <scope>NUCLEOTIDE SEQUENCE [LARGE SCALE GENOMIC DNA]</scope>
    <source>
        <strain>ATCC 700930 / 2457T / Serotype 2a</strain>
    </source>
</reference>
<protein>
    <recommendedName>
        <fullName evidence="1">Nucleoid-associated protein YbaB</fullName>
    </recommendedName>
</protein>
<organism>
    <name type="scientific">Shigella flexneri</name>
    <dbReference type="NCBI Taxonomy" id="623"/>
    <lineage>
        <taxon>Bacteria</taxon>
        <taxon>Pseudomonadati</taxon>
        <taxon>Pseudomonadota</taxon>
        <taxon>Gammaproteobacteria</taxon>
        <taxon>Enterobacterales</taxon>
        <taxon>Enterobacteriaceae</taxon>
        <taxon>Shigella</taxon>
    </lineage>
</organism>
<accession>P0A8C0</accession>
<accession>P09994</accession>
<accession>P17577</accession>
<sequence>MFGKGGLGNLMKQAQQMQEKMQKMQEEIAQLEVTGESGAGLVKVTINGAHNCRRVEIDPSLLEDDKEMLEDLVAAAFNDAARRIEETQKEKMASVSSGMQLPPGFKMPF</sequence>
<gene>
    <name evidence="1" type="primary">ybaB</name>
    <name type="ordered locus">SF0416</name>
    <name type="ordered locus">S0423</name>
</gene>
<feature type="chain" id="PRO_0000170433" description="Nucleoid-associated protein YbaB">
    <location>
        <begin position="1"/>
        <end position="109"/>
    </location>
</feature>
<dbReference type="EMBL" id="AE005674">
    <property type="protein sequence ID" value="AAN42071.2"/>
    <property type="molecule type" value="Genomic_DNA"/>
</dbReference>
<dbReference type="EMBL" id="AE014073">
    <property type="protein sequence ID" value="AAP15948.1"/>
    <property type="molecule type" value="Genomic_DNA"/>
</dbReference>
<dbReference type="RefSeq" id="NP_706364.2">
    <property type="nucleotide sequence ID" value="NC_004337.2"/>
</dbReference>
<dbReference type="RefSeq" id="WP_000467098.1">
    <property type="nucleotide sequence ID" value="NZ_WPGW01000015.1"/>
</dbReference>
<dbReference type="SMR" id="P0A8C0"/>
<dbReference type="STRING" id="198214.SF0416"/>
<dbReference type="PaxDb" id="198214-SF0416"/>
<dbReference type="GeneID" id="1027735"/>
<dbReference type="KEGG" id="sfl:SF0416"/>
<dbReference type="KEGG" id="sfx:S0423"/>
<dbReference type="PATRIC" id="fig|198214.7.peg.478"/>
<dbReference type="HOGENOM" id="CLU_140930_0_0_6"/>
<dbReference type="Proteomes" id="UP000001006">
    <property type="component" value="Chromosome"/>
</dbReference>
<dbReference type="Proteomes" id="UP000002673">
    <property type="component" value="Chromosome"/>
</dbReference>
<dbReference type="GO" id="GO:0043590">
    <property type="term" value="C:bacterial nucleoid"/>
    <property type="evidence" value="ECO:0007669"/>
    <property type="project" value="UniProtKB-UniRule"/>
</dbReference>
<dbReference type="GO" id="GO:0005829">
    <property type="term" value="C:cytosol"/>
    <property type="evidence" value="ECO:0007669"/>
    <property type="project" value="TreeGrafter"/>
</dbReference>
<dbReference type="GO" id="GO:0003677">
    <property type="term" value="F:DNA binding"/>
    <property type="evidence" value="ECO:0007669"/>
    <property type="project" value="UniProtKB-UniRule"/>
</dbReference>
<dbReference type="FunFam" id="3.30.1310.10:FF:000001">
    <property type="entry name" value="Nucleoid-associated protein YbaB"/>
    <property type="match status" value="1"/>
</dbReference>
<dbReference type="Gene3D" id="3.30.1310.10">
    <property type="entry name" value="Nucleoid-associated protein YbaB-like domain"/>
    <property type="match status" value="1"/>
</dbReference>
<dbReference type="HAMAP" id="MF_00274">
    <property type="entry name" value="DNA_YbaB_EbfC"/>
    <property type="match status" value="1"/>
</dbReference>
<dbReference type="InterPro" id="IPR036894">
    <property type="entry name" value="YbaB-like_sf"/>
</dbReference>
<dbReference type="InterPro" id="IPR004401">
    <property type="entry name" value="YbaB/EbfC"/>
</dbReference>
<dbReference type="NCBIfam" id="TIGR00103">
    <property type="entry name" value="DNA_YbaB_EbfC"/>
    <property type="match status" value="1"/>
</dbReference>
<dbReference type="PANTHER" id="PTHR33449">
    <property type="entry name" value="NUCLEOID-ASSOCIATED PROTEIN YBAB"/>
    <property type="match status" value="1"/>
</dbReference>
<dbReference type="PANTHER" id="PTHR33449:SF1">
    <property type="entry name" value="NUCLEOID-ASSOCIATED PROTEIN YBAB"/>
    <property type="match status" value="1"/>
</dbReference>
<dbReference type="Pfam" id="PF02575">
    <property type="entry name" value="YbaB_DNA_bd"/>
    <property type="match status" value="1"/>
</dbReference>
<dbReference type="PIRSF" id="PIRSF004555">
    <property type="entry name" value="UCP004555"/>
    <property type="match status" value="1"/>
</dbReference>
<dbReference type="SUPFAM" id="SSF82607">
    <property type="entry name" value="YbaB-like"/>
    <property type="match status" value="1"/>
</dbReference>
<keyword id="KW-0963">Cytoplasm</keyword>
<keyword id="KW-0238">DNA-binding</keyword>
<keyword id="KW-1185">Reference proteome</keyword>
<proteinExistence type="inferred from homology"/>
<evidence type="ECO:0000255" key="1">
    <source>
        <dbReference type="HAMAP-Rule" id="MF_00274"/>
    </source>
</evidence>